<dbReference type="EC" id="3.5.4.-"/>
<dbReference type="EMBL" id="AE014297">
    <property type="protein sequence ID" value="AAF54337.1"/>
    <property type="molecule type" value="Genomic_DNA"/>
</dbReference>
<dbReference type="EMBL" id="BT031009">
    <property type="protein sequence ID" value="ABV82391.1"/>
    <property type="molecule type" value="mRNA"/>
</dbReference>
<dbReference type="RefSeq" id="NP_649866.1">
    <property type="nucleotide sequence ID" value="NM_141609.3"/>
</dbReference>
<dbReference type="SMR" id="Q9VHH7"/>
<dbReference type="FunCoup" id="Q9VHH7">
    <property type="interactions" value="1229"/>
</dbReference>
<dbReference type="IntAct" id="Q9VHH7">
    <property type="interactions" value="2"/>
</dbReference>
<dbReference type="STRING" id="7227.FBpp0081451"/>
<dbReference type="PaxDb" id="7227-FBpp0081451"/>
<dbReference type="DNASU" id="41092"/>
<dbReference type="EnsemblMetazoa" id="FBtr0081971">
    <property type="protein sequence ID" value="FBpp0081451"/>
    <property type="gene ID" value="FBgn0037661"/>
</dbReference>
<dbReference type="GeneID" id="41092"/>
<dbReference type="KEGG" id="dme:Dmel_CG11994"/>
<dbReference type="AGR" id="FB:FBgn0037661"/>
<dbReference type="CTD" id="100"/>
<dbReference type="FlyBase" id="FBgn0037661">
    <property type="gene designation" value="Ada"/>
</dbReference>
<dbReference type="VEuPathDB" id="VectorBase:FBgn0037661"/>
<dbReference type="eggNOG" id="KOG1097">
    <property type="taxonomic scope" value="Eukaryota"/>
</dbReference>
<dbReference type="GeneTree" id="ENSGT00950000183113"/>
<dbReference type="HOGENOM" id="CLU_039228_3_0_1"/>
<dbReference type="InParanoid" id="Q9VHH7"/>
<dbReference type="OMA" id="RPQFKPY"/>
<dbReference type="OrthoDB" id="272271at2759"/>
<dbReference type="PhylomeDB" id="Q9VHH7"/>
<dbReference type="Reactome" id="R-DME-2161541">
    <property type="pathway name" value="Abacavir metabolism"/>
</dbReference>
<dbReference type="Reactome" id="R-DME-74217">
    <property type="pathway name" value="Purine salvage"/>
</dbReference>
<dbReference type="BioGRID-ORCS" id="41092">
    <property type="hits" value="0 hits in 3 CRISPR screens"/>
</dbReference>
<dbReference type="GenomeRNAi" id="41092"/>
<dbReference type="PRO" id="PR:Q9VHH7"/>
<dbReference type="Proteomes" id="UP000000803">
    <property type="component" value="Chromosome 3R"/>
</dbReference>
<dbReference type="Bgee" id="FBgn0037661">
    <property type="expression patterns" value="Expressed in saliva-secreting gland and 29 other cell types or tissues"/>
</dbReference>
<dbReference type="GO" id="GO:0004000">
    <property type="term" value="F:adenosine deaminase activity"/>
    <property type="evidence" value="ECO:0000318"/>
    <property type="project" value="GO_Central"/>
</dbReference>
<dbReference type="GO" id="GO:0046872">
    <property type="term" value="F:metal ion binding"/>
    <property type="evidence" value="ECO:0007669"/>
    <property type="project" value="UniProtKB-KW"/>
</dbReference>
<dbReference type="GO" id="GO:0062154">
    <property type="term" value="F:N6-methyl-AMP deaminase activity"/>
    <property type="evidence" value="ECO:0007669"/>
    <property type="project" value="RHEA"/>
</dbReference>
<dbReference type="GO" id="GO:0006154">
    <property type="term" value="P:adenosine catabolic process"/>
    <property type="evidence" value="ECO:0000318"/>
    <property type="project" value="GO_Central"/>
</dbReference>
<dbReference type="GO" id="GO:0046103">
    <property type="term" value="P:inosine biosynthetic process"/>
    <property type="evidence" value="ECO:0000318"/>
    <property type="project" value="GO_Central"/>
</dbReference>
<dbReference type="GO" id="GO:0009117">
    <property type="term" value="P:nucleotide metabolic process"/>
    <property type="evidence" value="ECO:0007669"/>
    <property type="project" value="UniProtKB-KW"/>
</dbReference>
<dbReference type="CDD" id="cd00443">
    <property type="entry name" value="ADA_AMPD"/>
    <property type="match status" value="1"/>
</dbReference>
<dbReference type="FunFam" id="3.20.20.140:FF:000033">
    <property type="entry name" value="Adenosine deaminase-like protein"/>
    <property type="match status" value="1"/>
</dbReference>
<dbReference type="Gene3D" id="3.20.20.140">
    <property type="entry name" value="Metal-dependent hydrolases"/>
    <property type="match status" value="1"/>
</dbReference>
<dbReference type="InterPro" id="IPR001365">
    <property type="entry name" value="A_deaminase_dom"/>
</dbReference>
<dbReference type="InterPro" id="IPR006330">
    <property type="entry name" value="Ado/ade_deaminase"/>
</dbReference>
<dbReference type="InterPro" id="IPR032466">
    <property type="entry name" value="Metal_Hydrolase"/>
</dbReference>
<dbReference type="PANTHER" id="PTHR11409">
    <property type="entry name" value="ADENOSINE DEAMINASE"/>
    <property type="match status" value="1"/>
</dbReference>
<dbReference type="PANTHER" id="PTHR11409:SF42">
    <property type="entry name" value="ADENOSINE DEAMINASE-LIKE PROTEIN"/>
    <property type="match status" value="1"/>
</dbReference>
<dbReference type="Pfam" id="PF00962">
    <property type="entry name" value="A_deaminase"/>
    <property type="match status" value="1"/>
</dbReference>
<dbReference type="SUPFAM" id="SSF51556">
    <property type="entry name" value="Metallo-dependent hydrolases"/>
    <property type="match status" value="1"/>
</dbReference>
<accession>Q9VHH7</accession>
<accession>A8E767</accession>
<keyword id="KW-0378">Hydrolase</keyword>
<keyword id="KW-0479">Metal-binding</keyword>
<keyword id="KW-0546">Nucleotide metabolism</keyword>
<keyword id="KW-1185">Reference proteome</keyword>
<keyword id="KW-0862">Zinc</keyword>
<sequence>MEQFLKGLPKVELHAHLNGSLGIKSLCDLGERLYGTSCKDFLKLCAHFSRFEKDMDACFEKFAFVHELTSTREGLRFATELAIRDFAEDNVQYVEMRTTPKANENYSRRDYLQIVIDAIKAASETYPEITVKLLPSINRAEPVDVAEETVSLAVELARAHPNLILGIDLSGNPGKGRFSDFAPILAQARDKGLKLAIHCAEIENPSEVKEMLHFGMSRCGHGTFLTPEDIGQLKQRNIAIECCLTSNVKSGTVPSLEEHHLKRIMEADAPKVICTDDSGVFDTTLTKEFLIAAETFGLTREQCIDLTLEAVHHSFASEQEQIQMADRVGNYADILVK</sequence>
<evidence type="ECO:0000250" key="1">
    <source>
        <dbReference type="UniProtKB" id="P03958"/>
    </source>
</evidence>
<evidence type="ECO:0000250" key="2">
    <source>
        <dbReference type="UniProtKB" id="Q6DHV7"/>
    </source>
</evidence>
<evidence type="ECO:0000250" key="3">
    <source>
        <dbReference type="UniProtKB" id="Q8LPL7"/>
    </source>
</evidence>
<evidence type="ECO:0000305" key="4"/>
<feature type="chain" id="PRO_0000285094" description="Adenosine deaminase-like protein">
    <location>
        <begin position="1"/>
        <end position="337"/>
    </location>
</feature>
<feature type="active site" description="Proton donor" evidence="1">
    <location>
        <position position="201"/>
    </location>
</feature>
<feature type="binding site" evidence="3">
    <location>
        <position position="14"/>
    </location>
    <ligand>
        <name>Zn(2+)</name>
        <dbReference type="ChEBI" id="CHEBI:29105"/>
        <note>catalytic</note>
    </ligand>
</feature>
<feature type="binding site" evidence="3">
    <location>
        <position position="16"/>
    </location>
    <ligand>
        <name>N(6)-methyl-AMP</name>
        <dbReference type="ChEBI" id="CHEBI:144842"/>
    </ligand>
</feature>
<feature type="binding site" evidence="3">
    <location>
        <position position="16"/>
    </location>
    <ligand>
        <name>Zn(2+)</name>
        <dbReference type="ChEBI" id="CHEBI:29105"/>
        <note>catalytic</note>
    </ligand>
</feature>
<feature type="binding site" evidence="3">
    <location>
        <position position="18"/>
    </location>
    <ligand>
        <name>N(6)-methyl-AMP</name>
        <dbReference type="ChEBI" id="CHEBI:144842"/>
    </ligand>
</feature>
<feature type="binding site" evidence="3">
    <location>
        <position position="66"/>
    </location>
    <ligand>
        <name>N(6)-methyl-AMP</name>
        <dbReference type="ChEBI" id="CHEBI:144842"/>
    </ligand>
</feature>
<feature type="binding site" evidence="3">
    <location>
        <begin position="98"/>
        <end position="101"/>
    </location>
    <ligand>
        <name>N(6)-methyl-AMP</name>
        <dbReference type="ChEBI" id="CHEBI:144842"/>
    </ligand>
</feature>
<feature type="binding site" evidence="3">
    <location>
        <position position="171"/>
    </location>
    <ligand>
        <name>N(6)-methyl-AMP</name>
        <dbReference type="ChEBI" id="CHEBI:144842"/>
    </ligand>
</feature>
<feature type="binding site" evidence="3">
    <location>
        <position position="198"/>
    </location>
    <ligand>
        <name>Zn(2+)</name>
        <dbReference type="ChEBI" id="CHEBI:29105"/>
        <note>catalytic</note>
    </ligand>
</feature>
<feature type="binding site" evidence="3">
    <location>
        <position position="201"/>
    </location>
    <ligand>
        <name>N(6)-methyl-AMP</name>
        <dbReference type="ChEBI" id="CHEBI:144842"/>
    </ligand>
</feature>
<feature type="binding site" evidence="3">
    <location>
        <position position="276"/>
    </location>
    <ligand>
        <name>N(6)-methyl-AMP</name>
        <dbReference type="ChEBI" id="CHEBI:144842"/>
    </ligand>
</feature>
<feature type="binding site" evidence="3">
    <location>
        <position position="276"/>
    </location>
    <ligand>
        <name>Zn(2+)</name>
        <dbReference type="ChEBI" id="CHEBI:29105"/>
        <note>catalytic</note>
    </ligand>
</feature>
<feature type="binding site" evidence="3">
    <location>
        <position position="277"/>
    </location>
    <ligand>
        <name>N(6)-methyl-AMP</name>
        <dbReference type="ChEBI" id="CHEBI:144842"/>
    </ligand>
</feature>
<feature type="site" description="Important for catalytic activity" evidence="1">
    <location>
        <position position="221"/>
    </location>
</feature>
<reference key="1">
    <citation type="journal article" date="2000" name="Science">
        <title>The genome sequence of Drosophila melanogaster.</title>
        <authorList>
            <person name="Adams M.D."/>
            <person name="Celniker S.E."/>
            <person name="Holt R.A."/>
            <person name="Evans C.A."/>
            <person name="Gocayne J.D."/>
            <person name="Amanatides P.G."/>
            <person name="Scherer S.E."/>
            <person name="Li P.W."/>
            <person name="Hoskins R.A."/>
            <person name="Galle R.F."/>
            <person name="George R.A."/>
            <person name="Lewis S.E."/>
            <person name="Richards S."/>
            <person name="Ashburner M."/>
            <person name="Henderson S.N."/>
            <person name="Sutton G.G."/>
            <person name="Wortman J.R."/>
            <person name="Yandell M.D."/>
            <person name="Zhang Q."/>
            <person name="Chen L.X."/>
            <person name="Brandon R.C."/>
            <person name="Rogers Y.-H.C."/>
            <person name="Blazej R.G."/>
            <person name="Champe M."/>
            <person name="Pfeiffer B.D."/>
            <person name="Wan K.H."/>
            <person name="Doyle C."/>
            <person name="Baxter E.G."/>
            <person name="Helt G."/>
            <person name="Nelson C.R."/>
            <person name="Miklos G.L.G."/>
            <person name="Abril J.F."/>
            <person name="Agbayani A."/>
            <person name="An H.-J."/>
            <person name="Andrews-Pfannkoch C."/>
            <person name="Baldwin D."/>
            <person name="Ballew R.M."/>
            <person name="Basu A."/>
            <person name="Baxendale J."/>
            <person name="Bayraktaroglu L."/>
            <person name="Beasley E.M."/>
            <person name="Beeson K.Y."/>
            <person name="Benos P.V."/>
            <person name="Berman B.P."/>
            <person name="Bhandari D."/>
            <person name="Bolshakov S."/>
            <person name="Borkova D."/>
            <person name="Botchan M.R."/>
            <person name="Bouck J."/>
            <person name="Brokstein P."/>
            <person name="Brottier P."/>
            <person name="Burtis K.C."/>
            <person name="Busam D.A."/>
            <person name="Butler H."/>
            <person name="Cadieu E."/>
            <person name="Center A."/>
            <person name="Chandra I."/>
            <person name="Cherry J.M."/>
            <person name="Cawley S."/>
            <person name="Dahlke C."/>
            <person name="Davenport L.B."/>
            <person name="Davies P."/>
            <person name="de Pablos B."/>
            <person name="Delcher A."/>
            <person name="Deng Z."/>
            <person name="Mays A.D."/>
            <person name="Dew I."/>
            <person name="Dietz S.M."/>
            <person name="Dodson K."/>
            <person name="Doup L.E."/>
            <person name="Downes M."/>
            <person name="Dugan-Rocha S."/>
            <person name="Dunkov B.C."/>
            <person name="Dunn P."/>
            <person name="Durbin K.J."/>
            <person name="Evangelista C.C."/>
            <person name="Ferraz C."/>
            <person name="Ferriera S."/>
            <person name="Fleischmann W."/>
            <person name="Fosler C."/>
            <person name="Gabrielian A.E."/>
            <person name="Garg N.S."/>
            <person name="Gelbart W.M."/>
            <person name="Glasser K."/>
            <person name="Glodek A."/>
            <person name="Gong F."/>
            <person name="Gorrell J.H."/>
            <person name="Gu Z."/>
            <person name="Guan P."/>
            <person name="Harris M."/>
            <person name="Harris N.L."/>
            <person name="Harvey D.A."/>
            <person name="Heiman T.J."/>
            <person name="Hernandez J.R."/>
            <person name="Houck J."/>
            <person name="Hostin D."/>
            <person name="Houston K.A."/>
            <person name="Howland T.J."/>
            <person name="Wei M.-H."/>
            <person name="Ibegwam C."/>
            <person name="Jalali M."/>
            <person name="Kalush F."/>
            <person name="Karpen G.H."/>
            <person name="Ke Z."/>
            <person name="Kennison J.A."/>
            <person name="Ketchum K.A."/>
            <person name="Kimmel B.E."/>
            <person name="Kodira C.D."/>
            <person name="Kraft C.L."/>
            <person name="Kravitz S."/>
            <person name="Kulp D."/>
            <person name="Lai Z."/>
            <person name="Lasko P."/>
            <person name="Lei Y."/>
            <person name="Levitsky A.A."/>
            <person name="Li J.H."/>
            <person name="Li Z."/>
            <person name="Liang Y."/>
            <person name="Lin X."/>
            <person name="Liu X."/>
            <person name="Mattei B."/>
            <person name="McIntosh T.C."/>
            <person name="McLeod M.P."/>
            <person name="McPherson D."/>
            <person name="Merkulov G."/>
            <person name="Milshina N.V."/>
            <person name="Mobarry C."/>
            <person name="Morris J."/>
            <person name="Moshrefi A."/>
            <person name="Mount S.M."/>
            <person name="Moy M."/>
            <person name="Murphy B."/>
            <person name="Murphy L."/>
            <person name="Muzny D.M."/>
            <person name="Nelson D.L."/>
            <person name="Nelson D.R."/>
            <person name="Nelson K.A."/>
            <person name="Nixon K."/>
            <person name="Nusskern D.R."/>
            <person name="Pacleb J.M."/>
            <person name="Palazzolo M."/>
            <person name="Pittman G.S."/>
            <person name="Pan S."/>
            <person name="Pollard J."/>
            <person name="Puri V."/>
            <person name="Reese M.G."/>
            <person name="Reinert K."/>
            <person name="Remington K."/>
            <person name="Saunders R.D.C."/>
            <person name="Scheeler F."/>
            <person name="Shen H."/>
            <person name="Shue B.C."/>
            <person name="Siden-Kiamos I."/>
            <person name="Simpson M."/>
            <person name="Skupski M.P."/>
            <person name="Smith T.J."/>
            <person name="Spier E."/>
            <person name="Spradling A.C."/>
            <person name="Stapleton M."/>
            <person name="Strong R."/>
            <person name="Sun E."/>
            <person name="Svirskas R."/>
            <person name="Tector C."/>
            <person name="Turner R."/>
            <person name="Venter E."/>
            <person name="Wang A.H."/>
            <person name="Wang X."/>
            <person name="Wang Z.-Y."/>
            <person name="Wassarman D.A."/>
            <person name="Weinstock G.M."/>
            <person name="Weissenbach J."/>
            <person name="Williams S.M."/>
            <person name="Woodage T."/>
            <person name="Worley K.C."/>
            <person name="Wu D."/>
            <person name="Yang S."/>
            <person name="Yao Q.A."/>
            <person name="Ye J."/>
            <person name="Yeh R.-F."/>
            <person name="Zaveri J.S."/>
            <person name="Zhan M."/>
            <person name="Zhang G."/>
            <person name="Zhao Q."/>
            <person name="Zheng L."/>
            <person name="Zheng X.H."/>
            <person name="Zhong F.N."/>
            <person name="Zhong W."/>
            <person name="Zhou X."/>
            <person name="Zhu S.C."/>
            <person name="Zhu X."/>
            <person name="Smith H.O."/>
            <person name="Gibbs R.A."/>
            <person name="Myers E.W."/>
            <person name="Rubin G.M."/>
            <person name="Venter J.C."/>
        </authorList>
    </citation>
    <scope>NUCLEOTIDE SEQUENCE [LARGE SCALE GENOMIC DNA]</scope>
    <source>
        <strain>Berkeley</strain>
    </source>
</reference>
<reference key="2">
    <citation type="journal article" date="2002" name="Genome Biol.">
        <title>Annotation of the Drosophila melanogaster euchromatic genome: a systematic review.</title>
        <authorList>
            <person name="Misra S."/>
            <person name="Crosby M.A."/>
            <person name="Mungall C.J."/>
            <person name="Matthews B.B."/>
            <person name="Campbell K.S."/>
            <person name="Hradecky P."/>
            <person name="Huang Y."/>
            <person name="Kaminker J.S."/>
            <person name="Millburn G.H."/>
            <person name="Prochnik S.E."/>
            <person name="Smith C.D."/>
            <person name="Tupy J.L."/>
            <person name="Whitfield E.J."/>
            <person name="Bayraktaroglu L."/>
            <person name="Berman B.P."/>
            <person name="Bettencourt B.R."/>
            <person name="Celniker S.E."/>
            <person name="de Grey A.D.N.J."/>
            <person name="Drysdale R.A."/>
            <person name="Harris N.L."/>
            <person name="Richter J."/>
            <person name="Russo S."/>
            <person name="Schroeder A.J."/>
            <person name="Shu S.Q."/>
            <person name="Stapleton M."/>
            <person name="Yamada C."/>
            <person name="Ashburner M."/>
            <person name="Gelbart W.M."/>
            <person name="Rubin G.M."/>
            <person name="Lewis S.E."/>
        </authorList>
    </citation>
    <scope>GENOME REANNOTATION</scope>
    <source>
        <strain>Berkeley</strain>
    </source>
</reference>
<reference key="3">
    <citation type="submission" date="2007-10" db="EMBL/GenBank/DDBJ databases">
        <authorList>
            <person name="Stapleton M."/>
            <person name="Carlson J.W."/>
            <person name="Frise E."/>
            <person name="Kapadia B."/>
            <person name="Park S."/>
            <person name="Wan K.H."/>
            <person name="Yu C."/>
            <person name="Celniker S.E."/>
        </authorList>
    </citation>
    <scope>NUCLEOTIDE SEQUENCE [LARGE SCALE MRNA]</scope>
    <source>
        <strain>Berkeley</strain>
        <tissue>Embryo</tissue>
    </source>
</reference>
<organism>
    <name type="scientific">Drosophila melanogaster</name>
    <name type="common">Fruit fly</name>
    <dbReference type="NCBI Taxonomy" id="7227"/>
    <lineage>
        <taxon>Eukaryota</taxon>
        <taxon>Metazoa</taxon>
        <taxon>Ecdysozoa</taxon>
        <taxon>Arthropoda</taxon>
        <taxon>Hexapoda</taxon>
        <taxon>Insecta</taxon>
        <taxon>Pterygota</taxon>
        <taxon>Neoptera</taxon>
        <taxon>Endopterygota</taxon>
        <taxon>Diptera</taxon>
        <taxon>Brachycera</taxon>
        <taxon>Muscomorpha</taxon>
        <taxon>Ephydroidea</taxon>
        <taxon>Drosophilidae</taxon>
        <taxon>Drosophila</taxon>
        <taxon>Sophophora</taxon>
    </lineage>
</organism>
<proteinExistence type="evidence at transcript level"/>
<protein>
    <recommendedName>
        <fullName>Adenosine deaminase-like protein</fullName>
        <ecNumber>3.5.4.-</ecNumber>
    </recommendedName>
</protein>
<comment type="function">
    <text evidence="2">Catalyzes the hydrolysis of the free cytosolic methylated adenosine nucleotide N(6)-methyl-AMP (N6-mAMP) to produce inositol monophosphate (IMP) and methylamine. Is required for the catabolism of cytosolic N6-mAMP, which is derived from the degradation of mRNA containing N6-methylated adenine (m6A).</text>
</comment>
<comment type="catalytic activity">
    <reaction evidence="2">
        <text>N(6)-methyl-AMP + H2O + H(+) = IMP + methylamine</text>
        <dbReference type="Rhea" id="RHEA:16001"/>
        <dbReference type="ChEBI" id="CHEBI:15377"/>
        <dbReference type="ChEBI" id="CHEBI:15378"/>
        <dbReference type="ChEBI" id="CHEBI:58053"/>
        <dbReference type="ChEBI" id="CHEBI:59338"/>
        <dbReference type="ChEBI" id="CHEBI:144842"/>
    </reaction>
    <physiologicalReaction direction="left-to-right" evidence="2">
        <dbReference type="Rhea" id="RHEA:16002"/>
    </physiologicalReaction>
</comment>
<comment type="cofactor">
    <cofactor evidence="2">
        <name>Zn(2+)</name>
        <dbReference type="ChEBI" id="CHEBI:29105"/>
    </cofactor>
    <text evidence="2">Binds 1 zinc ion per subunit.</text>
</comment>
<comment type="subunit">
    <text evidence="2">Monomer.</text>
</comment>
<comment type="similarity">
    <text evidence="4">Belongs to the metallo-dependent hydrolases superfamily. Adenosine and AMP deaminases family.</text>
</comment>
<gene>
    <name type="primary">Ada</name>
    <name type="ORF">CG11994</name>
</gene>
<name>ADAL_DROME</name>